<keyword id="KW-0012">Acyltransferase</keyword>
<keyword id="KW-0256">Endoplasmic reticulum</keyword>
<keyword id="KW-0325">Glycoprotein</keyword>
<keyword id="KW-0472">Membrane</keyword>
<keyword id="KW-1185">Reference proteome</keyword>
<keyword id="KW-0808">Transferase</keyword>
<keyword id="KW-0812">Transmembrane</keyword>
<keyword id="KW-1133">Transmembrane helix</keyword>
<sequence length="537" mass="63098">MTDTPRILITPSPLSDISTTINKPNVHPSMSLLKALPECRLVVKSKGDKNNANVVEFPLDRHKQLLIAGKVYHDYKFKPRKSIFDRVTDPNYFAKSEFRGFYVLFWLSMAAWVLQLYARSYWQRDTLLGLPLARQVFRQFFVLFSSDFLMICLSFFSYGLQVCIEKNMIRWANLGYTIQTLWQGFYMVLAVYWVKHRDFPIVQCVFFTLHCAVLIMKQFSYSHHMGYISEIRILHNEYEKLLKFVRECLNSTEKDEKYTFELTFPNKPAETISTLQAEEIVALTAKYLSRQMRSEVGNVVYPDNINFFNYVDYLLVPSLVYSMEFPRVAHFRWHYMAFKAGSTFGLLALTLALVDWYFVPSAVAVKDLDFIGKLRIAPLLMNKIMFPAIILYLIMFYLIFDCILNAFAEITKFADRGFYGAWWNTVTWDEFSREWNKPVHVFLMRHVYHSSISGFKLKKSHAVLLTFLISALVHEFVMLLATGKFRCYILTFQLLQIPLYDLQQMFAFKKRDILGNVFFWIGMFTGPSFLCILYIVF</sequence>
<feature type="chain" id="PRO_0000207652" description="Probable sterol O-acyltransferase 1">
    <location>
        <begin position="1"/>
        <end position="537"/>
    </location>
</feature>
<feature type="transmembrane region" description="Helical" evidence="3">
    <location>
        <begin position="98"/>
        <end position="118"/>
    </location>
</feature>
<feature type="transmembrane region" description="Helical" evidence="3">
    <location>
        <begin position="140"/>
        <end position="160"/>
    </location>
</feature>
<feature type="transmembrane region" description="Helical" evidence="3">
    <location>
        <begin position="174"/>
        <end position="194"/>
    </location>
</feature>
<feature type="transmembrane region" description="Helical" evidence="3">
    <location>
        <begin position="199"/>
        <end position="219"/>
    </location>
</feature>
<feature type="transmembrane region" description="Helical" evidence="3">
    <location>
        <begin position="344"/>
        <end position="364"/>
    </location>
</feature>
<feature type="transmembrane region" description="Helical" evidence="3">
    <location>
        <begin position="384"/>
        <end position="404"/>
    </location>
</feature>
<feature type="transmembrane region" description="Helical" evidence="3">
    <location>
        <begin position="462"/>
        <end position="482"/>
    </location>
</feature>
<feature type="transmembrane region" description="Helical" evidence="3">
    <location>
        <begin position="517"/>
        <end position="537"/>
    </location>
</feature>
<feature type="short sequence motif" description="FYXDWWN motif" evidence="2">
    <location>
        <begin position="418"/>
        <end position="424"/>
    </location>
</feature>
<feature type="active site" evidence="2">
    <location>
        <position position="474"/>
    </location>
</feature>
<feature type="glycosylation site" description="N-linked (GlcNAc...) asparagine" evidence="3">
    <location>
        <position position="250"/>
    </location>
</feature>
<organism>
    <name type="scientific">Schizosaccharomyces pombe (strain 972 / ATCC 24843)</name>
    <name type="common">Fission yeast</name>
    <dbReference type="NCBI Taxonomy" id="284812"/>
    <lineage>
        <taxon>Eukaryota</taxon>
        <taxon>Fungi</taxon>
        <taxon>Dikarya</taxon>
        <taxon>Ascomycota</taxon>
        <taxon>Taphrinomycotina</taxon>
        <taxon>Schizosaccharomycetes</taxon>
        <taxon>Schizosaccharomycetales</taxon>
        <taxon>Schizosaccharomycetaceae</taxon>
        <taxon>Schizosaccharomyces</taxon>
    </lineage>
</organism>
<gene>
    <name type="primary">are1</name>
    <name type="ORF">SPAC13G7.05</name>
</gene>
<proteinExistence type="inferred from homology"/>
<protein>
    <recommendedName>
        <fullName>Probable sterol O-acyltransferase 1</fullName>
        <ecNumber>2.3.1.-</ecNumber>
    </recommendedName>
    <alternativeName>
        <fullName>Sterol-ester synthase 1</fullName>
    </alternativeName>
</protein>
<dbReference type="EC" id="2.3.1.-"/>
<dbReference type="EMBL" id="CU329670">
    <property type="protein sequence ID" value="CAA93593.1"/>
    <property type="molecule type" value="Genomic_DNA"/>
</dbReference>
<dbReference type="PIR" id="S67434">
    <property type="entry name" value="S67434"/>
</dbReference>
<dbReference type="RefSeq" id="NP_593707.1">
    <property type="nucleotide sequence ID" value="NM_001019138.2"/>
</dbReference>
<dbReference type="BioGRID" id="279297">
    <property type="interactions" value="4"/>
</dbReference>
<dbReference type="FunCoup" id="Q10269">
    <property type="interactions" value="216"/>
</dbReference>
<dbReference type="STRING" id="284812.Q10269"/>
<dbReference type="GlyCosmos" id="Q10269">
    <property type="glycosylation" value="1 site, No reported glycans"/>
</dbReference>
<dbReference type="iPTMnet" id="Q10269"/>
<dbReference type="PaxDb" id="4896-SPAC13G7.05.1"/>
<dbReference type="EnsemblFungi" id="SPAC13G7.05.1">
    <property type="protein sequence ID" value="SPAC13G7.05.1:pep"/>
    <property type="gene ID" value="SPAC13G7.05"/>
</dbReference>
<dbReference type="GeneID" id="2542851"/>
<dbReference type="KEGG" id="spo:2542851"/>
<dbReference type="PomBase" id="SPAC13G7.05">
    <property type="gene designation" value="are1"/>
</dbReference>
<dbReference type="VEuPathDB" id="FungiDB:SPAC13G7.05"/>
<dbReference type="eggNOG" id="KOG0380">
    <property type="taxonomic scope" value="Eukaryota"/>
</dbReference>
<dbReference type="HOGENOM" id="CLU_018190_2_1_1"/>
<dbReference type="InParanoid" id="Q10269"/>
<dbReference type="OMA" id="LMCTLYL"/>
<dbReference type="PhylomeDB" id="Q10269"/>
<dbReference type="PRO" id="PR:Q10269"/>
<dbReference type="Proteomes" id="UP000002485">
    <property type="component" value="Chromosome I"/>
</dbReference>
<dbReference type="GO" id="GO:0032541">
    <property type="term" value="C:cortical endoplasmic reticulum"/>
    <property type="evidence" value="ECO:0000314"/>
    <property type="project" value="PomBase"/>
</dbReference>
<dbReference type="GO" id="GO:0005783">
    <property type="term" value="C:endoplasmic reticulum"/>
    <property type="evidence" value="ECO:0007005"/>
    <property type="project" value="PomBase"/>
</dbReference>
<dbReference type="GO" id="GO:0005789">
    <property type="term" value="C:endoplasmic reticulum membrane"/>
    <property type="evidence" value="ECO:0000318"/>
    <property type="project" value="GO_Central"/>
</dbReference>
<dbReference type="GO" id="GO:0097038">
    <property type="term" value="C:perinuclear endoplasmic reticulum"/>
    <property type="evidence" value="ECO:0000314"/>
    <property type="project" value="PomBase"/>
</dbReference>
<dbReference type="GO" id="GO:0034737">
    <property type="term" value="F:ergosterol O-acyltransferase activity"/>
    <property type="evidence" value="ECO:0000318"/>
    <property type="project" value="GO_Central"/>
</dbReference>
<dbReference type="GO" id="GO:0008204">
    <property type="term" value="P:ergosterol metabolic process"/>
    <property type="evidence" value="ECO:0000318"/>
    <property type="project" value="GO_Central"/>
</dbReference>
<dbReference type="GO" id="GO:0140042">
    <property type="term" value="P:lipid droplet formation"/>
    <property type="evidence" value="ECO:0000315"/>
    <property type="project" value="PomBase"/>
</dbReference>
<dbReference type="InterPro" id="IPR004299">
    <property type="entry name" value="MBOAT_fam"/>
</dbReference>
<dbReference type="InterPro" id="IPR014371">
    <property type="entry name" value="Oat_ACAT_DAG_ARE"/>
</dbReference>
<dbReference type="PANTHER" id="PTHR10408">
    <property type="entry name" value="STEROL O-ACYLTRANSFERASE"/>
    <property type="match status" value="1"/>
</dbReference>
<dbReference type="PANTHER" id="PTHR10408:SF23">
    <property type="entry name" value="STEROL O-ACYLTRANSFERASE 1-RELATED"/>
    <property type="match status" value="1"/>
</dbReference>
<dbReference type="Pfam" id="PF03062">
    <property type="entry name" value="MBOAT"/>
    <property type="match status" value="1"/>
</dbReference>
<dbReference type="PIRSF" id="PIRSF000439">
    <property type="entry name" value="Oat_ACAT_DAG_ARE"/>
    <property type="match status" value="1"/>
</dbReference>
<accession>Q10269</accession>
<comment type="function">
    <text evidence="1">Sterol O-acyltransferase that catalyzes the formation of stery esters.</text>
</comment>
<comment type="subcellular location">
    <subcellularLocation>
        <location evidence="4">Endoplasmic reticulum membrane</location>
        <topology evidence="4">Multi-pass membrane protein</topology>
    </subcellularLocation>
</comment>
<comment type="similarity">
    <text evidence="5">Belongs to the membrane-bound acyltransferase family. Sterol o-acyltransferase subfamily.</text>
</comment>
<reference key="1">
    <citation type="journal article" date="2002" name="Nature">
        <title>The genome sequence of Schizosaccharomyces pombe.</title>
        <authorList>
            <person name="Wood V."/>
            <person name="Gwilliam R."/>
            <person name="Rajandream M.A."/>
            <person name="Lyne M.H."/>
            <person name="Lyne R."/>
            <person name="Stewart A."/>
            <person name="Sgouros J.G."/>
            <person name="Peat N."/>
            <person name="Hayles J."/>
            <person name="Baker S.G."/>
            <person name="Basham D."/>
            <person name="Bowman S."/>
            <person name="Brooks K."/>
            <person name="Brown D."/>
            <person name="Brown S."/>
            <person name="Chillingworth T."/>
            <person name="Churcher C.M."/>
            <person name="Collins M."/>
            <person name="Connor R."/>
            <person name="Cronin A."/>
            <person name="Davis P."/>
            <person name="Feltwell T."/>
            <person name="Fraser A."/>
            <person name="Gentles S."/>
            <person name="Goble A."/>
            <person name="Hamlin N."/>
            <person name="Harris D.E."/>
            <person name="Hidalgo J."/>
            <person name="Hodgson G."/>
            <person name="Holroyd S."/>
            <person name="Hornsby T."/>
            <person name="Howarth S."/>
            <person name="Huckle E.J."/>
            <person name="Hunt S."/>
            <person name="Jagels K."/>
            <person name="James K.D."/>
            <person name="Jones L."/>
            <person name="Jones M."/>
            <person name="Leather S."/>
            <person name="McDonald S."/>
            <person name="McLean J."/>
            <person name="Mooney P."/>
            <person name="Moule S."/>
            <person name="Mungall K.L."/>
            <person name="Murphy L.D."/>
            <person name="Niblett D."/>
            <person name="Odell C."/>
            <person name="Oliver K."/>
            <person name="O'Neil S."/>
            <person name="Pearson D."/>
            <person name="Quail M.A."/>
            <person name="Rabbinowitsch E."/>
            <person name="Rutherford K.M."/>
            <person name="Rutter S."/>
            <person name="Saunders D."/>
            <person name="Seeger K."/>
            <person name="Sharp S."/>
            <person name="Skelton J."/>
            <person name="Simmonds M.N."/>
            <person name="Squares R."/>
            <person name="Squares S."/>
            <person name="Stevens K."/>
            <person name="Taylor K."/>
            <person name="Taylor R.G."/>
            <person name="Tivey A."/>
            <person name="Walsh S.V."/>
            <person name="Warren T."/>
            <person name="Whitehead S."/>
            <person name="Woodward J.R."/>
            <person name="Volckaert G."/>
            <person name="Aert R."/>
            <person name="Robben J."/>
            <person name="Grymonprez B."/>
            <person name="Weltjens I."/>
            <person name="Vanstreels E."/>
            <person name="Rieger M."/>
            <person name="Schaefer M."/>
            <person name="Mueller-Auer S."/>
            <person name="Gabel C."/>
            <person name="Fuchs M."/>
            <person name="Duesterhoeft A."/>
            <person name="Fritzc C."/>
            <person name="Holzer E."/>
            <person name="Moestl D."/>
            <person name="Hilbert H."/>
            <person name="Borzym K."/>
            <person name="Langer I."/>
            <person name="Beck A."/>
            <person name="Lehrach H."/>
            <person name="Reinhardt R."/>
            <person name="Pohl T.M."/>
            <person name="Eger P."/>
            <person name="Zimmermann W."/>
            <person name="Wedler H."/>
            <person name="Wambutt R."/>
            <person name="Purnelle B."/>
            <person name="Goffeau A."/>
            <person name="Cadieu E."/>
            <person name="Dreano S."/>
            <person name="Gloux S."/>
            <person name="Lelaure V."/>
            <person name="Mottier S."/>
            <person name="Galibert F."/>
            <person name="Aves S.J."/>
            <person name="Xiang Z."/>
            <person name="Hunt C."/>
            <person name="Moore K."/>
            <person name="Hurst S.M."/>
            <person name="Lucas M."/>
            <person name="Rochet M."/>
            <person name="Gaillardin C."/>
            <person name="Tallada V.A."/>
            <person name="Garzon A."/>
            <person name="Thode G."/>
            <person name="Daga R.R."/>
            <person name="Cruzado L."/>
            <person name="Jimenez J."/>
            <person name="Sanchez M."/>
            <person name="del Rey F."/>
            <person name="Benito J."/>
            <person name="Dominguez A."/>
            <person name="Revuelta J.L."/>
            <person name="Moreno S."/>
            <person name="Armstrong J."/>
            <person name="Forsburg S.L."/>
            <person name="Cerutti L."/>
            <person name="Lowe T."/>
            <person name="McCombie W.R."/>
            <person name="Paulsen I."/>
            <person name="Potashkin J."/>
            <person name="Shpakovski G.V."/>
            <person name="Ussery D."/>
            <person name="Barrell B.G."/>
            <person name="Nurse P."/>
        </authorList>
    </citation>
    <scope>NUCLEOTIDE SEQUENCE [LARGE SCALE GENOMIC DNA]</scope>
    <source>
        <strain>972 / ATCC 24843</strain>
    </source>
</reference>
<reference key="2">
    <citation type="journal article" date="2006" name="Nat. Biotechnol.">
        <title>ORFeome cloning and global analysis of protein localization in the fission yeast Schizosaccharomyces pombe.</title>
        <authorList>
            <person name="Matsuyama A."/>
            <person name="Arai R."/>
            <person name="Yashiroda Y."/>
            <person name="Shirai A."/>
            <person name="Kamata A."/>
            <person name="Sekido S."/>
            <person name="Kobayashi Y."/>
            <person name="Hashimoto A."/>
            <person name="Hamamoto M."/>
            <person name="Hiraoka Y."/>
            <person name="Horinouchi S."/>
            <person name="Yoshida M."/>
        </authorList>
    </citation>
    <scope>SUBCELLULAR LOCATION [LARGE SCALE ANALYSIS]</scope>
</reference>
<evidence type="ECO:0000250" key="1">
    <source>
        <dbReference type="UniProtKB" id="P25628"/>
    </source>
</evidence>
<evidence type="ECO:0000250" key="2">
    <source>
        <dbReference type="UniProtKB" id="P35610"/>
    </source>
</evidence>
<evidence type="ECO:0000255" key="3"/>
<evidence type="ECO:0000269" key="4">
    <source>
    </source>
</evidence>
<evidence type="ECO:0000305" key="5"/>
<name>AREH1_SCHPO</name>